<protein>
    <recommendedName>
        <fullName evidence="1">Exodeoxyribonuclease 7 large subunit</fullName>
        <ecNumber evidence="1">3.1.11.6</ecNumber>
    </recommendedName>
    <alternativeName>
        <fullName evidence="1">Exodeoxyribonuclease VII large subunit</fullName>
        <shortName evidence="1">Exonuclease VII large subunit</shortName>
    </alternativeName>
</protein>
<comment type="function">
    <text evidence="1">Bidirectionally degrades single-stranded DNA into large acid-insoluble oligonucleotides, which are then degraded further into small acid-soluble oligonucleotides.</text>
</comment>
<comment type="catalytic activity">
    <reaction evidence="1">
        <text>Exonucleolytic cleavage in either 5'- to 3'- or 3'- to 5'-direction to yield nucleoside 5'-phosphates.</text>
        <dbReference type="EC" id="3.1.11.6"/>
    </reaction>
</comment>
<comment type="subunit">
    <text evidence="1">Heterooligomer composed of large and small subunits.</text>
</comment>
<comment type="subcellular location">
    <subcellularLocation>
        <location evidence="1">Cytoplasm</location>
    </subcellularLocation>
</comment>
<comment type="similarity">
    <text evidence="1">Belongs to the XseA family.</text>
</comment>
<gene>
    <name evidence="1" type="primary">xseA</name>
    <name type="ordered locus">PMI1547</name>
</gene>
<organism>
    <name type="scientific">Proteus mirabilis (strain HI4320)</name>
    <dbReference type="NCBI Taxonomy" id="529507"/>
    <lineage>
        <taxon>Bacteria</taxon>
        <taxon>Pseudomonadati</taxon>
        <taxon>Pseudomonadota</taxon>
        <taxon>Gammaproteobacteria</taxon>
        <taxon>Enterobacterales</taxon>
        <taxon>Morganellaceae</taxon>
        <taxon>Proteus</taxon>
    </lineage>
</organism>
<sequence length="462" mass="52281">MTLPINNNIFTVSRLNKTVRQLLEMEMGRIWISAEISNFTQPASGHWYFTLKDTHAQIRAAMFRGQNTKVTFRPQHGQQVLVRATITLYEPRGDYQLIVESMQPAGDGLLQQQFELLKQKLSAEGLFDALHKKPLPTPAKQIGVITSSTGAALHDILNILRRRDPSLPIIIYPTAVQGAEAPMQIVHAIELANRRKECDVLIVGRGGGSLEDLWAFNDERVARAIFASDIPIVSAVGHETDVTIADFIADLRAPTPSAAAELISRNKLELLRQLQSQQQRLEMAMDYYLAKKLRALTQLHHRLQQQHPHLRLARQQNVLATTKQRLVTSFQRLLQTKQNQHTQLQKRLNYQEPSPQIQALLRQQQQLIYRMRESISQQLARQREQFAISCSRLESVSPLATLSRGYSISEVASGDVLKNTKQVKKGDTLKTRVEDGWITSEVINTQKIPAKRKPAPKSKSSI</sequence>
<proteinExistence type="inferred from homology"/>
<name>EX7L_PROMH</name>
<dbReference type="EC" id="3.1.11.6" evidence="1"/>
<dbReference type="EMBL" id="AM942759">
    <property type="protein sequence ID" value="CAR43242.1"/>
    <property type="molecule type" value="Genomic_DNA"/>
</dbReference>
<dbReference type="RefSeq" id="WP_004243392.1">
    <property type="nucleotide sequence ID" value="NC_010554.1"/>
</dbReference>
<dbReference type="SMR" id="B4EY61"/>
<dbReference type="EnsemblBacteria" id="CAR43242">
    <property type="protein sequence ID" value="CAR43242"/>
    <property type="gene ID" value="PMI1547"/>
</dbReference>
<dbReference type="GeneID" id="6800933"/>
<dbReference type="KEGG" id="pmr:PMI1547"/>
<dbReference type="eggNOG" id="COG1570">
    <property type="taxonomic scope" value="Bacteria"/>
</dbReference>
<dbReference type="HOGENOM" id="CLU_023625_3_1_6"/>
<dbReference type="Proteomes" id="UP000008319">
    <property type="component" value="Chromosome"/>
</dbReference>
<dbReference type="GO" id="GO:0005737">
    <property type="term" value="C:cytoplasm"/>
    <property type="evidence" value="ECO:0007669"/>
    <property type="project" value="UniProtKB-SubCell"/>
</dbReference>
<dbReference type="GO" id="GO:0009318">
    <property type="term" value="C:exodeoxyribonuclease VII complex"/>
    <property type="evidence" value="ECO:0007669"/>
    <property type="project" value="InterPro"/>
</dbReference>
<dbReference type="GO" id="GO:0008855">
    <property type="term" value="F:exodeoxyribonuclease VII activity"/>
    <property type="evidence" value="ECO:0007669"/>
    <property type="project" value="UniProtKB-UniRule"/>
</dbReference>
<dbReference type="GO" id="GO:0003676">
    <property type="term" value="F:nucleic acid binding"/>
    <property type="evidence" value="ECO:0007669"/>
    <property type="project" value="InterPro"/>
</dbReference>
<dbReference type="GO" id="GO:0006308">
    <property type="term" value="P:DNA catabolic process"/>
    <property type="evidence" value="ECO:0007669"/>
    <property type="project" value="UniProtKB-UniRule"/>
</dbReference>
<dbReference type="CDD" id="cd04489">
    <property type="entry name" value="ExoVII_LU_OBF"/>
    <property type="match status" value="1"/>
</dbReference>
<dbReference type="HAMAP" id="MF_00378">
    <property type="entry name" value="Exonuc_7_L"/>
    <property type="match status" value="1"/>
</dbReference>
<dbReference type="InterPro" id="IPR003753">
    <property type="entry name" value="Exonuc_VII_L"/>
</dbReference>
<dbReference type="InterPro" id="IPR020579">
    <property type="entry name" value="Exonuc_VII_lsu_C"/>
</dbReference>
<dbReference type="InterPro" id="IPR025824">
    <property type="entry name" value="OB-fold_nuc-bd_dom"/>
</dbReference>
<dbReference type="NCBIfam" id="TIGR00237">
    <property type="entry name" value="xseA"/>
    <property type="match status" value="1"/>
</dbReference>
<dbReference type="PANTHER" id="PTHR30008">
    <property type="entry name" value="EXODEOXYRIBONUCLEASE 7 LARGE SUBUNIT"/>
    <property type="match status" value="1"/>
</dbReference>
<dbReference type="PANTHER" id="PTHR30008:SF0">
    <property type="entry name" value="EXODEOXYRIBONUCLEASE 7 LARGE SUBUNIT"/>
    <property type="match status" value="1"/>
</dbReference>
<dbReference type="Pfam" id="PF02601">
    <property type="entry name" value="Exonuc_VII_L"/>
    <property type="match status" value="1"/>
</dbReference>
<dbReference type="Pfam" id="PF13742">
    <property type="entry name" value="tRNA_anti_2"/>
    <property type="match status" value="1"/>
</dbReference>
<feature type="chain" id="PRO_1000122076" description="Exodeoxyribonuclease 7 large subunit">
    <location>
        <begin position="1"/>
        <end position="462"/>
    </location>
</feature>
<reference key="1">
    <citation type="journal article" date="2008" name="J. Bacteriol.">
        <title>Complete genome sequence of uropathogenic Proteus mirabilis, a master of both adherence and motility.</title>
        <authorList>
            <person name="Pearson M.M."/>
            <person name="Sebaihia M."/>
            <person name="Churcher C."/>
            <person name="Quail M.A."/>
            <person name="Seshasayee A.S."/>
            <person name="Luscombe N.M."/>
            <person name="Abdellah Z."/>
            <person name="Arrosmith C."/>
            <person name="Atkin B."/>
            <person name="Chillingworth T."/>
            <person name="Hauser H."/>
            <person name="Jagels K."/>
            <person name="Moule S."/>
            <person name="Mungall K."/>
            <person name="Norbertczak H."/>
            <person name="Rabbinowitsch E."/>
            <person name="Walker D."/>
            <person name="Whithead S."/>
            <person name="Thomson N.R."/>
            <person name="Rather P.N."/>
            <person name="Parkhill J."/>
            <person name="Mobley H.L.T."/>
        </authorList>
    </citation>
    <scope>NUCLEOTIDE SEQUENCE [LARGE SCALE GENOMIC DNA]</scope>
    <source>
        <strain>HI4320</strain>
    </source>
</reference>
<evidence type="ECO:0000255" key="1">
    <source>
        <dbReference type="HAMAP-Rule" id="MF_00378"/>
    </source>
</evidence>
<keyword id="KW-0963">Cytoplasm</keyword>
<keyword id="KW-0269">Exonuclease</keyword>
<keyword id="KW-0378">Hydrolase</keyword>
<keyword id="KW-0540">Nuclease</keyword>
<keyword id="KW-1185">Reference proteome</keyword>
<accession>B4EY61</accession>